<dbReference type="EC" id="3.5.4.2" evidence="1"/>
<dbReference type="EMBL" id="CP001089">
    <property type="protein sequence ID" value="ACD94724.1"/>
    <property type="molecule type" value="Genomic_DNA"/>
</dbReference>
<dbReference type="RefSeq" id="WP_012469074.1">
    <property type="nucleotide sequence ID" value="NC_010814.1"/>
</dbReference>
<dbReference type="SMR" id="B3E600"/>
<dbReference type="STRING" id="398767.Glov_1001"/>
<dbReference type="KEGG" id="glo:Glov_1001"/>
<dbReference type="eggNOG" id="COG1816">
    <property type="taxonomic scope" value="Bacteria"/>
</dbReference>
<dbReference type="HOGENOM" id="CLU_039228_7_0_7"/>
<dbReference type="OrthoDB" id="105475at2"/>
<dbReference type="Proteomes" id="UP000002420">
    <property type="component" value="Chromosome"/>
</dbReference>
<dbReference type="GO" id="GO:0005829">
    <property type="term" value="C:cytosol"/>
    <property type="evidence" value="ECO:0007669"/>
    <property type="project" value="TreeGrafter"/>
</dbReference>
<dbReference type="GO" id="GO:0000034">
    <property type="term" value="F:adenine deaminase activity"/>
    <property type="evidence" value="ECO:0007669"/>
    <property type="project" value="UniProtKB-UniRule"/>
</dbReference>
<dbReference type="GO" id="GO:0008270">
    <property type="term" value="F:zinc ion binding"/>
    <property type="evidence" value="ECO:0007669"/>
    <property type="project" value="UniProtKB-UniRule"/>
</dbReference>
<dbReference type="GO" id="GO:0006146">
    <property type="term" value="P:adenine catabolic process"/>
    <property type="evidence" value="ECO:0007669"/>
    <property type="project" value="UniProtKB-UniRule"/>
</dbReference>
<dbReference type="GO" id="GO:0043103">
    <property type="term" value="P:hypoxanthine salvage"/>
    <property type="evidence" value="ECO:0007669"/>
    <property type="project" value="UniProtKB-UniRule"/>
</dbReference>
<dbReference type="GO" id="GO:0009117">
    <property type="term" value="P:nucleotide metabolic process"/>
    <property type="evidence" value="ECO:0007669"/>
    <property type="project" value="UniProtKB-KW"/>
</dbReference>
<dbReference type="CDD" id="cd01320">
    <property type="entry name" value="ADA"/>
    <property type="match status" value="1"/>
</dbReference>
<dbReference type="FunFam" id="3.20.20.140:FF:000039">
    <property type="entry name" value="Adenine deaminase"/>
    <property type="match status" value="1"/>
</dbReference>
<dbReference type="Gene3D" id="3.20.20.140">
    <property type="entry name" value="Metal-dependent hydrolases"/>
    <property type="match status" value="1"/>
</dbReference>
<dbReference type="HAMAP" id="MF_01962">
    <property type="entry name" value="Adenine_deaminase"/>
    <property type="match status" value="1"/>
</dbReference>
<dbReference type="InterPro" id="IPR001365">
    <property type="entry name" value="A_deaminase_dom"/>
</dbReference>
<dbReference type="InterPro" id="IPR028892">
    <property type="entry name" value="ADE"/>
</dbReference>
<dbReference type="InterPro" id="IPR006330">
    <property type="entry name" value="Ado/ade_deaminase"/>
</dbReference>
<dbReference type="InterPro" id="IPR032466">
    <property type="entry name" value="Metal_Hydrolase"/>
</dbReference>
<dbReference type="NCBIfam" id="TIGR01430">
    <property type="entry name" value="aden_deam"/>
    <property type="match status" value="1"/>
</dbReference>
<dbReference type="NCBIfam" id="NF006850">
    <property type="entry name" value="PRK09358.1-6"/>
    <property type="match status" value="1"/>
</dbReference>
<dbReference type="PANTHER" id="PTHR43114">
    <property type="entry name" value="ADENINE DEAMINASE"/>
    <property type="match status" value="1"/>
</dbReference>
<dbReference type="PANTHER" id="PTHR43114:SF6">
    <property type="entry name" value="ADENINE DEAMINASE"/>
    <property type="match status" value="1"/>
</dbReference>
<dbReference type="Pfam" id="PF00962">
    <property type="entry name" value="A_deaminase"/>
    <property type="match status" value="1"/>
</dbReference>
<dbReference type="SUPFAM" id="SSF51556">
    <property type="entry name" value="Metallo-dependent hydrolases"/>
    <property type="match status" value="1"/>
</dbReference>
<name>ADE_TRIL1</name>
<proteinExistence type="inferred from homology"/>
<evidence type="ECO:0000255" key="1">
    <source>
        <dbReference type="HAMAP-Rule" id="MF_01962"/>
    </source>
</evidence>
<feature type="chain" id="PRO_1000128848" description="Adenine deaminase">
    <location>
        <begin position="1"/>
        <end position="349"/>
    </location>
</feature>
<feature type="active site" description="Proton donor" evidence="1">
    <location>
        <position position="207"/>
    </location>
</feature>
<feature type="binding site" evidence="1">
    <location>
        <position position="24"/>
    </location>
    <ligand>
        <name>Zn(2+)</name>
        <dbReference type="ChEBI" id="CHEBI:29105"/>
        <note>catalytic</note>
    </ligand>
</feature>
<feature type="binding site" evidence="1">
    <location>
        <position position="26"/>
    </location>
    <ligand>
        <name>Zn(2+)</name>
        <dbReference type="ChEBI" id="CHEBI:29105"/>
        <note>catalytic</note>
    </ligand>
</feature>
<feature type="binding site" evidence="1">
    <location>
        <position position="204"/>
    </location>
    <ligand>
        <name>Zn(2+)</name>
        <dbReference type="ChEBI" id="CHEBI:29105"/>
        <note>catalytic</note>
    </ligand>
</feature>
<feature type="binding site" evidence="1">
    <location>
        <position position="285"/>
    </location>
    <ligand>
        <name>Zn(2+)</name>
        <dbReference type="ChEBI" id="CHEBI:29105"/>
        <note>catalytic</note>
    </ligand>
</feature>
<feature type="binding site" evidence="1">
    <location>
        <position position="286"/>
    </location>
    <ligand>
        <name>substrate</name>
    </ligand>
</feature>
<feature type="site" description="Important for catalytic activity" evidence="1">
    <location>
        <position position="228"/>
    </location>
</feature>
<reference key="1">
    <citation type="submission" date="2008-05" db="EMBL/GenBank/DDBJ databases">
        <title>Complete sequence of chromosome of Geobacter lovleyi SZ.</title>
        <authorList>
            <consortium name="US DOE Joint Genome Institute"/>
            <person name="Lucas S."/>
            <person name="Copeland A."/>
            <person name="Lapidus A."/>
            <person name="Glavina del Rio T."/>
            <person name="Dalin E."/>
            <person name="Tice H."/>
            <person name="Bruce D."/>
            <person name="Goodwin L."/>
            <person name="Pitluck S."/>
            <person name="Chertkov O."/>
            <person name="Meincke L."/>
            <person name="Brettin T."/>
            <person name="Detter J.C."/>
            <person name="Han C."/>
            <person name="Tapia R."/>
            <person name="Kuske C.R."/>
            <person name="Schmutz J."/>
            <person name="Larimer F."/>
            <person name="Land M."/>
            <person name="Hauser L."/>
            <person name="Kyrpides N."/>
            <person name="Mikhailova N."/>
            <person name="Sung Y."/>
            <person name="Fletcher K.E."/>
            <person name="Ritalahti K.M."/>
            <person name="Loeffler F.E."/>
            <person name="Richardson P."/>
        </authorList>
    </citation>
    <scope>NUCLEOTIDE SEQUENCE [LARGE SCALE GENOMIC DNA]</scope>
    <source>
        <strain>ATCC BAA-1151 / DSM 17278 / SZ</strain>
    </source>
</reference>
<keyword id="KW-0378">Hydrolase</keyword>
<keyword id="KW-0479">Metal-binding</keyword>
<keyword id="KW-0546">Nucleotide metabolism</keyword>
<keyword id="KW-1185">Reference proteome</keyword>
<keyword id="KW-0862">Zinc</keyword>
<protein>
    <recommendedName>
        <fullName evidence="1">Adenine deaminase</fullName>
        <shortName evidence="1">ADE</shortName>
        <ecNumber evidence="1">3.5.4.2</ecNumber>
    </recommendedName>
    <alternativeName>
        <fullName evidence="1">Adenine aminohydrolase</fullName>
        <shortName evidence="1">AAH</shortName>
    </alternativeName>
</protein>
<sequence length="349" mass="39130">MNLTNIPRQALPELLCRMPKAELHIHIEGSLEPELIFALAERNRLQLAYPTIESLRAAYAFTNLQSFLDIYYAGASVLQTEQDFFDMAWAYLLRAKADNVVHAEIFFDPQTHTARGIPFATIINGLDRAIQQGRNELGISAALILCFLRHLTEADAFTVLEEALPFRDKFIGVGLDSGEKGNPPEKFSRVFARCRELGLRLVAHAGEEGTAEYIWHALDLLQAERIDHGVHCLDDPQLVTRLVQQQVPLTVCPLSNVKLRVFPDLAAHNIARLLACGIRATINSDDPAYFGGYLNQNYLETFAALPELGAAEAYQLARNSFEASFVDAEVKAGWIRELDQFFQQQCDKI</sequence>
<accession>B3E600</accession>
<organism>
    <name type="scientific">Trichlorobacter lovleyi (strain ATCC BAA-1151 / DSM 17278 / SZ)</name>
    <name type="common">Geobacter lovleyi</name>
    <dbReference type="NCBI Taxonomy" id="398767"/>
    <lineage>
        <taxon>Bacteria</taxon>
        <taxon>Pseudomonadati</taxon>
        <taxon>Thermodesulfobacteriota</taxon>
        <taxon>Desulfuromonadia</taxon>
        <taxon>Geobacterales</taxon>
        <taxon>Geobacteraceae</taxon>
        <taxon>Trichlorobacter</taxon>
    </lineage>
</organism>
<gene>
    <name type="ordered locus">Glov_1001</name>
</gene>
<comment type="function">
    <text evidence="1">Catalyzes the hydrolytic deamination of adenine to hypoxanthine. Plays an important role in the purine salvage pathway and in nitrogen catabolism.</text>
</comment>
<comment type="catalytic activity">
    <reaction evidence="1">
        <text>adenine + H2O + H(+) = hypoxanthine + NH4(+)</text>
        <dbReference type="Rhea" id="RHEA:23688"/>
        <dbReference type="ChEBI" id="CHEBI:15377"/>
        <dbReference type="ChEBI" id="CHEBI:15378"/>
        <dbReference type="ChEBI" id="CHEBI:16708"/>
        <dbReference type="ChEBI" id="CHEBI:17368"/>
        <dbReference type="ChEBI" id="CHEBI:28938"/>
        <dbReference type="EC" id="3.5.4.2"/>
    </reaction>
</comment>
<comment type="cofactor">
    <cofactor evidence="1">
        <name>Zn(2+)</name>
        <dbReference type="ChEBI" id="CHEBI:29105"/>
    </cofactor>
    <text evidence="1">Binds 1 zinc ion per subunit.</text>
</comment>
<comment type="similarity">
    <text evidence="1">Belongs to the metallo-dependent hydrolases superfamily. Adenosine and AMP deaminases family. Adenine deaminase type 2 subfamily.</text>
</comment>